<name>RL2_CELJU</name>
<comment type="function">
    <text evidence="1">One of the primary rRNA binding proteins. Required for association of the 30S and 50S subunits to form the 70S ribosome, for tRNA binding and peptide bond formation. It has been suggested to have peptidyltransferase activity; this is somewhat controversial. Makes several contacts with the 16S rRNA in the 70S ribosome.</text>
</comment>
<comment type="subunit">
    <text evidence="1">Part of the 50S ribosomal subunit. Forms a bridge to the 30S subunit in the 70S ribosome.</text>
</comment>
<comment type="similarity">
    <text evidence="1">Belongs to the universal ribosomal protein uL2 family.</text>
</comment>
<feature type="chain" id="PRO_1000141521" description="Large ribosomal subunit protein uL2">
    <location>
        <begin position="1"/>
        <end position="275"/>
    </location>
</feature>
<feature type="region of interest" description="Disordered" evidence="2">
    <location>
        <begin position="28"/>
        <end position="55"/>
    </location>
</feature>
<feature type="region of interest" description="Disordered" evidence="2">
    <location>
        <begin position="224"/>
        <end position="258"/>
    </location>
</feature>
<feature type="compositionally biased region" description="Basic and acidic residues" evidence="2">
    <location>
        <begin position="28"/>
        <end position="38"/>
    </location>
</feature>
<keyword id="KW-1185">Reference proteome</keyword>
<keyword id="KW-0687">Ribonucleoprotein</keyword>
<keyword id="KW-0689">Ribosomal protein</keyword>
<keyword id="KW-0694">RNA-binding</keyword>
<keyword id="KW-0699">rRNA-binding</keyword>
<organism>
    <name type="scientific">Cellvibrio japonicus (strain Ueda107)</name>
    <name type="common">Pseudomonas fluorescens subsp. cellulosa</name>
    <dbReference type="NCBI Taxonomy" id="498211"/>
    <lineage>
        <taxon>Bacteria</taxon>
        <taxon>Pseudomonadati</taxon>
        <taxon>Pseudomonadota</taxon>
        <taxon>Gammaproteobacteria</taxon>
        <taxon>Cellvibrionales</taxon>
        <taxon>Cellvibrionaceae</taxon>
        <taxon>Cellvibrio</taxon>
    </lineage>
</organism>
<protein>
    <recommendedName>
        <fullName evidence="1">Large ribosomal subunit protein uL2</fullName>
    </recommendedName>
    <alternativeName>
        <fullName evidence="3">50S ribosomal protein L2</fullName>
    </alternativeName>
</protein>
<accession>B3PK40</accession>
<proteinExistence type="inferred from homology"/>
<sequence>MAIVKSKPTSPGRRFVVKVVNHDLHKGEPYAPLLDKKSKSGGRNNTGRITTRHVGGGHKQHYRIVDFRRNKDGIPATVERIEYDPNRTAYIALVVYADGERRYIIAPKGLSAGDKIESGNAAAIKVGNTLPVRNIPLGSVIHCVELKPGKGAQLARSAGASAQLVAKDGAYVTLRLRSGEMRKVLSDCRATLGEVSNTEHNLRSLGKAGAKRWLGIRPTVRGVAMNPVDHPHGGGEGRTSGGRHPVSPWGIPTKGYKTRKNKRTDNMIVRRRDKK</sequence>
<gene>
    <name evidence="1" type="primary">rplB</name>
    <name type="ordered locus">CJA_0702</name>
</gene>
<dbReference type="EMBL" id="CP000934">
    <property type="protein sequence ID" value="ACE82915.1"/>
    <property type="molecule type" value="Genomic_DNA"/>
</dbReference>
<dbReference type="RefSeq" id="WP_012486365.1">
    <property type="nucleotide sequence ID" value="NC_010995.1"/>
</dbReference>
<dbReference type="SMR" id="B3PK40"/>
<dbReference type="STRING" id="498211.CJA_0702"/>
<dbReference type="KEGG" id="cja:CJA_0702"/>
<dbReference type="eggNOG" id="COG0090">
    <property type="taxonomic scope" value="Bacteria"/>
</dbReference>
<dbReference type="HOGENOM" id="CLU_036235_2_1_6"/>
<dbReference type="OrthoDB" id="9778722at2"/>
<dbReference type="Proteomes" id="UP000001036">
    <property type="component" value="Chromosome"/>
</dbReference>
<dbReference type="GO" id="GO:0015934">
    <property type="term" value="C:large ribosomal subunit"/>
    <property type="evidence" value="ECO:0007669"/>
    <property type="project" value="InterPro"/>
</dbReference>
<dbReference type="GO" id="GO:0019843">
    <property type="term" value="F:rRNA binding"/>
    <property type="evidence" value="ECO:0007669"/>
    <property type="project" value="UniProtKB-UniRule"/>
</dbReference>
<dbReference type="GO" id="GO:0003735">
    <property type="term" value="F:structural constituent of ribosome"/>
    <property type="evidence" value="ECO:0007669"/>
    <property type="project" value="InterPro"/>
</dbReference>
<dbReference type="GO" id="GO:0016740">
    <property type="term" value="F:transferase activity"/>
    <property type="evidence" value="ECO:0007669"/>
    <property type="project" value="InterPro"/>
</dbReference>
<dbReference type="GO" id="GO:0002181">
    <property type="term" value="P:cytoplasmic translation"/>
    <property type="evidence" value="ECO:0007669"/>
    <property type="project" value="TreeGrafter"/>
</dbReference>
<dbReference type="FunFam" id="2.30.30.30:FF:000001">
    <property type="entry name" value="50S ribosomal protein L2"/>
    <property type="match status" value="1"/>
</dbReference>
<dbReference type="FunFam" id="2.40.50.140:FF:000003">
    <property type="entry name" value="50S ribosomal protein L2"/>
    <property type="match status" value="1"/>
</dbReference>
<dbReference type="FunFam" id="4.10.950.10:FF:000001">
    <property type="entry name" value="50S ribosomal protein L2"/>
    <property type="match status" value="1"/>
</dbReference>
<dbReference type="Gene3D" id="2.30.30.30">
    <property type="match status" value="1"/>
</dbReference>
<dbReference type="Gene3D" id="2.40.50.140">
    <property type="entry name" value="Nucleic acid-binding proteins"/>
    <property type="match status" value="1"/>
</dbReference>
<dbReference type="Gene3D" id="4.10.950.10">
    <property type="entry name" value="Ribosomal protein L2, domain 3"/>
    <property type="match status" value="1"/>
</dbReference>
<dbReference type="HAMAP" id="MF_01320_B">
    <property type="entry name" value="Ribosomal_uL2_B"/>
    <property type="match status" value="1"/>
</dbReference>
<dbReference type="InterPro" id="IPR012340">
    <property type="entry name" value="NA-bd_OB-fold"/>
</dbReference>
<dbReference type="InterPro" id="IPR014722">
    <property type="entry name" value="Rib_uL2_dom2"/>
</dbReference>
<dbReference type="InterPro" id="IPR002171">
    <property type="entry name" value="Ribosomal_uL2"/>
</dbReference>
<dbReference type="InterPro" id="IPR005880">
    <property type="entry name" value="Ribosomal_uL2_bac/org-type"/>
</dbReference>
<dbReference type="InterPro" id="IPR022669">
    <property type="entry name" value="Ribosomal_uL2_C"/>
</dbReference>
<dbReference type="InterPro" id="IPR022671">
    <property type="entry name" value="Ribosomal_uL2_CS"/>
</dbReference>
<dbReference type="InterPro" id="IPR014726">
    <property type="entry name" value="Ribosomal_uL2_dom3"/>
</dbReference>
<dbReference type="InterPro" id="IPR022666">
    <property type="entry name" value="Ribosomal_uL2_RNA-bd_dom"/>
</dbReference>
<dbReference type="InterPro" id="IPR008991">
    <property type="entry name" value="Translation_prot_SH3-like_sf"/>
</dbReference>
<dbReference type="NCBIfam" id="TIGR01171">
    <property type="entry name" value="rplB_bact"/>
    <property type="match status" value="1"/>
</dbReference>
<dbReference type="PANTHER" id="PTHR13691:SF5">
    <property type="entry name" value="LARGE RIBOSOMAL SUBUNIT PROTEIN UL2M"/>
    <property type="match status" value="1"/>
</dbReference>
<dbReference type="PANTHER" id="PTHR13691">
    <property type="entry name" value="RIBOSOMAL PROTEIN L2"/>
    <property type="match status" value="1"/>
</dbReference>
<dbReference type="Pfam" id="PF00181">
    <property type="entry name" value="Ribosomal_L2"/>
    <property type="match status" value="1"/>
</dbReference>
<dbReference type="Pfam" id="PF03947">
    <property type="entry name" value="Ribosomal_L2_C"/>
    <property type="match status" value="1"/>
</dbReference>
<dbReference type="PIRSF" id="PIRSF002158">
    <property type="entry name" value="Ribosomal_L2"/>
    <property type="match status" value="1"/>
</dbReference>
<dbReference type="SMART" id="SM01383">
    <property type="entry name" value="Ribosomal_L2"/>
    <property type="match status" value="1"/>
</dbReference>
<dbReference type="SMART" id="SM01382">
    <property type="entry name" value="Ribosomal_L2_C"/>
    <property type="match status" value="1"/>
</dbReference>
<dbReference type="SUPFAM" id="SSF50249">
    <property type="entry name" value="Nucleic acid-binding proteins"/>
    <property type="match status" value="1"/>
</dbReference>
<dbReference type="SUPFAM" id="SSF50104">
    <property type="entry name" value="Translation proteins SH3-like domain"/>
    <property type="match status" value="1"/>
</dbReference>
<dbReference type="PROSITE" id="PS00467">
    <property type="entry name" value="RIBOSOMAL_L2"/>
    <property type="match status" value="1"/>
</dbReference>
<evidence type="ECO:0000255" key="1">
    <source>
        <dbReference type="HAMAP-Rule" id="MF_01320"/>
    </source>
</evidence>
<evidence type="ECO:0000256" key="2">
    <source>
        <dbReference type="SAM" id="MobiDB-lite"/>
    </source>
</evidence>
<evidence type="ECO:0000305" key="3"/>
<reference key="1">
    <citation type="journal article" date="2008" name="J. Bacteriol.">
        <title>Insights into plant cell wall degradation from the genome sequence of the soil bacterium Cellvibrio japonicus.</title>
        <authorList>
            <person name="DeBoy R.T."/>
            <person name="Mongodin E.F."/>
            <person name="Fouts D.E."/>
            <person name="Tailford L.E."/>
            <person name="Khouri H."/>
            <person name="Emerson J.B."/>
            <person name="Mohamoud Y."/>
            <person name="Watkins K."/>
            <person name="Henrissat B."/>
            <person name="Gilbert H.J."/>
            <person name="Nelson K.E."/>
        </authorList>
    </citation>
    <scope>NUCLEOTIDE SEQUENCE [LARGE SCALE GENOMIC DNA]</scope>
    <source>
        <strain>Ueda107</strain>
    </source>
</reference>